<dbReference type="EC" id="2.3.1.47"/>
<dbReference type="EMBL" id="CP001280">
    <property type="protein sequence ID" value="ACK51071.1"/>
    <property type="molecule type" value="Genomic_DNA"/>
</dbReference>
<dbReference type="SMR" id="B8ERL9"/>
<dbReference type="STRING" id="395965.Msil_2132"/>
<dbReference type="KEGG" id="msl:Msil_2132"/>
<dbReference type="eggNOG" id="COG0156">
    <property type="taxonomic scope" value="Bacteria"/>
</dbReference>
<dbReference type="HOGENOM" id="CLU_015846_11_2_5"/>
<dbReference type="UniPathway" id="UPA00078"/>
<dbReference type="Proteomes" id="UP000002257">
    <property type="component" value="Chromosome"/>
</dbReference>
<dbReference type="GO" id="GO:0008710">
    <property type="term" value="F:8-amino-7-oxononanoate synthase activity"/>
    <property type="evidence" value="ECO:0007669"/>
    <property type="project" value="UniProtKB-EC"/>
</dbReference>
<dbReference type="GO" id="GO:0030170">
    <property type="term" value="F:pyridoxal phosphate binding"/>
    <property type="evidence" value="ECO:0007669"/>
    <property type="project" value="InterPro"/>
</dbReference>
<dbReference type="GO" id="GO:0009102">
    <property type="term" value="P:biotin biosynthetic process"/>
    <property type="evidence" value="ECO:0007669"/>
    <property type="project" value="UniProtKB-UniPathway"/>
</dbReference>
<dbReference type="Gene3D" id="3.90.1150.10">
    <property type="entry name" value="Aspartate Aminotransferase, domain 1"/>
    <property type="match status" value="1"/>
</dbReference>
<dbReference type="Gene3D" id="3.40.640.10">
    <property type="entry name" value="Type I PLP-dependent aspartate aminotransferase-like (Major domain)"/>
    <property type="match status" value="1"/>
</dbReference>
<dbReference type="InterPro" id="IPR001917">
    <property type="entry name" value="Aminotrans_II_pyridoxalP_BS"/>
</dbReference>
<dbReference type="InterPro" id="IPR004839">
    <property type="entry name" value="Aminotransferase_I/II_large"/>
</dbReference>
<dbReference type="InterPro" id="IPR050087">
    <property type="entry name" value="AON_synthase_class-II"/>
</dbReference>
<dbReference type="InterPro" id="IPR015424">
    <property type="entry name" value="PyrdxlP-dep_Trfase"/>
</dbReference>
<dbReference type="InterPro" id="IPR015421">
    <property type="entry name" value="PyrdxlP-dep_Trfase_major"/>
</dbReference>
<dbReference type="InterPro" id="IPR015422">
    <property type="entry name" value="PyrdxlP-dep_Trfase_small"/>
</dbReference>
<dbReference type="PANTHER" id="PTHR13693:SF100">
    <property type="entry name" value="8-AMINO-7-OXONONANOATE SYNTHASE"/>
    <property type="match status" value="1"/>
</dbReference>
<dbReference type="PANTHER" id="PTHR13693">
    <property type="entry name" value="CLASS II AMINOTRANSFERASE/8-AMINO-7-OXONONANOATE SYNTHASE"/>
    <property type="match status" value="1"/>
</dbReference>
<dbReference type="Pfam" id="PF00155">
    <property type="entry name" value="Aminotran_1_2"/>
    <property type="match status" value="1"/>
</dbReference>
<dbReference type="SUPFAM" id="SSF53383">
    <property type="entry name" value="PLP-dependent transferases"/>
    <property type="match status" value="1"/>
</dbReference>
<dbReference type="PROSITE" id="PS00599">
    <property type="entry name" value="AA_TRANSFER_CLASS_2"/>
    <property type="match status" value="1"/>
</dbReference>
<keyword id="KW-0012">Acyltransferase</keyword>
<keyword id="KW-0093">Biotin biosynthesis</keyword>
<keyword id="KW-0663">Pyridoxal phosphate</keyword>
<keyword id="KW-1185">Reference proteome</keyword>
<keyword id="KW-0808">Transferase</keyword>
<feature type="chain" id="PRO_0000381030" description="8-amino-7-oxononanoate synthase">
    <location>
        <begin position="1"/>
        <end position="350"/>
    </location>
</feature>
<feature type="binding site" evidence="1">
    <location>
        <begin position="77"/>
        <end position="78"/>
    </location>
    <ligand>
        <name>pyridoxal 5'-phosphate</name>
        <dbReference type="ChEBI" id="CHEBI:597326"/>
    </ligand>
</feature>
<feature type="binding site" evidence="1">
    <location>
        <position position="102"/>
    </location>
    <ligand>
        <name>substrate</name>
    </ligand>
</feature>
<feature type="binding site" evidence="1">
    <location>
        <position position="150"/>
    </location>
    <ligand>
        <name>pyridoxal 5'-phosphate</name>
        <dbReference type="ChEBI" id="CHEBI:597326"/>
    </ligand>
</feature>
<feature type="binding site" evidence="1">
    <location>
        <begin position="175"/>
        <end position="178"/>
    </location>
    <ligand>
        <name>pyridoxal 5'-phosphate</name>
        <dbReference type="ChEBI" id="CHEBI:597326"/>
    </ligand>
</feature>
<feature type="binding site" evidence="1">
    <location>
        <begin position="204"/>
        <end position="207"/>
    </location>
    <ligand>
        <name>pyridoxal 5'-phosphate</name>
        <dbReference type="ChEBI" id="CHEBI:597326"/>
    </ligand>
</feature>
<feature type="binding site" evidence="1">
    <location>
        <position position="316"/>
    </location>
    <ligand>
        <name>substrate</name>
    </ligand>
</feature>
<feature type="modified residue" description="N6-(pyridoxal phosphate)lysine" evidence="1">
    <location>
        <position position="207"/>
    </location>
</feature>
<evidence type="ECO:0000250" key="1"/>
<evidence type="ECO:0000305" key="2"/>
<accession>B8ERL9</accession>
<organism>
    <name type="scientific">Methylocella silvestris (strain DSM 15510 / CIP 108128 / LMG 27833 / NCIMB 13906 / BL2)</name>
    <dbReference type="NCBI Taxonomy" id="395965"/>
    <lineage>
        <taxon>Bacteria</taxon>
        <taxon>Pseudomonadati</taxon>
        <taxon>Pseudomonadota</taxon>
        <taxon>Alphaproteobacteria</taxon>
        <taxon>Hyphomicrobiales</taxon>
        <taxon>Beijerinckiaceae</taxon>
        <taxon>Methylocella</taxon>
    </lineage>
</organism>
<gene>
    <name type="ordered locus">Msil_2132</name>
</gene>
<reference key="1">
    <citation type="journal article" date="2010" name="J. Bacteriol.">
        <title>Complete genome sequence of the aerobic facultative methanotroph Methylocella silvestris BL2.</title>
        <authorList>
            <person name="Chen Y."/>
            <person name="Crombie A."/>
            <person name="Rahman M.T."/>
            <person name="Dedysh S.N."/>
            <person name="Liesack W."/>
            <person name="Stott M.B."/>
            <person name="Alam M."/>
            <person name="Theisen A.R."/>
            <person name="Murrell J.C."/>
            <person name="Dunfield P.F."/>
        </authorList>
    </citation>
    <scope>NUCLEOTIDE SEQUENCE [LARGE SCALE GENOMIC DNA]</scope>
    <source>
        <strain>DSM 15510 / CIP 108128 / LMG 27833 / NCIMB 13906 / BL2</strain>
    </source>
</reference>
<sequence length="350" mass="36086">MHILRGGRRLISFSCNDYLNLTHHPAVKSAAIAAINLYGAGSGASRLVTGNHPLLVELEERLARIKGTQAACVFGSGYLANTGIVPTLTGAKDLILIDELAHACLFAGTQLSPAKTMVFRHNDVAHAEAILAASRAQYRHALLLTDGVFSMDGDRAPLATLSALCAAHDAWLMSDDAHGLGVIGGGRGSVAAAGDPPVPLQMGTLSKAIGGYGGYLCASAAVIDLMKTRARTVIYSTGLPPASAGAALAALEIIENEPELTAKPLAKARAFCAALGLPEAQSPIVPVIVGAPEAALDASRQLADTGFLVTAIRPPTVPAGTARLRFAFTAGHADEDVARVAQAVRDIVKL</sequence>
<comment type="function">
    <text evidence="1">Catalyzes the decarboxylative condensation of pimeloyl-[acyl-carrier protein] and L-alanine to produce 8-amino-7-oxononanoate (AON), [acyl-carrier protein], and carbon dioxide.</text>
</comment>
<comment type="catalytic activity">
    <reaction>
        <text>6-carboxyhexanoyl-[ACP] + L-alanine + H(+) = (8S)-8-amino-7-oxononanoate + holo-[ACP] + CO2</text>
        <dbReference type="Rhea" id="RHEA:42288"/>
        <dbReference type="Rhea" id="RHEA-COMP:9685"/>
        <dbReference type="Rhea" id="RHEA-COMP:9955"/>
        <dbReference type="ChEBI" id="CHEBI:15378"/>
        <dbReference type="ChEBI" id="CHEBI:16526"/>
        <dbReference type="ChEBI" id="CHEBI:57972"/>
        <dbReference type="ChEBI" id="CHEBI:64479"/>
        <dbReference type="ChEBI" id="CHEBI:78846"/>
        <dbReference type="ChEBI" id="CHEBI:149468"/>
        <dbReference type="EC" id="2.3.1.47"/>
    </reaction>
</comment>
<comment type="cofactor">
    <cofactor evidence="1">
        <name>pyridoxal 5'-phosphate</name>
        <dbReference type="ChEBI" id="CHEBI:597326"/>
    </cofactor>
</comment>
<comment type="pathway">
    <text>Cofactor biosynthesis; biotin biosynthesis.</text>
</comment>
<comment type="subunit">
    <text evidence="1">Homodimer.</text>
</comment>
<comment type="similarity">
    <text evidence="2">Belongs to the class-II pyridoxal-phosphate-dependent aminotransferase family. BioF subfamily.</text>
</comment>
<proteinExistence type="inferred from homology"/>
<name>BIOF_METSB</name>
<protein>
    <recommendedName>
        <fullName>8-amino-7-oxononanoate synthase</fullName>
        <shortName>AONS</shortName>
        <ecNumber>2.3.1.47</ecNumber>
    </recommendedName>
    <alternativeName>
        <fullName>7-keto-8-amino-pelargonic acid synthase</fullName>
        <shortName>7-KAP synthase</shortName>
        <shortName>KAPA synthase</shortName>
    </alternativeName>
    <alternativeName>
        <fullName>8-amino-7-ketopelargonate synthase</fullName>
    </alternativeName>
    <alternativeName>
        <fullName>Alpha-oxoamine synthase</fullName>
    </alternativeName>
</protein>